<reference key="1">
    <citation type="journal article" date="2005" name="J. Bacteriol.">
        <title>Completion of the genome sequence of Brucella abortus and comparison to the highly similar genomes of Brucella melitensis and Brucella suis.</title>
        <authorList>
            <person name="Halling S.M."/>
            <person name="Peterson-Burch B.D."/>
            <person name="Bricker B.J."/>
            <person name="Zuerner R.L."/>
            <person name="Qing Z."/>
            <person name="Li L.-L."/>
            <person name="Kapur V."/>
            <person name="Alt D.P."/>
            <person name="Olsen S.C."/>
        </authorList>
    </citation>
    <scope>NUCLEOTIDE SEQUENCE [LARGE SCALE GENOMIC DNA]</scope>
    <source>
        <strain>9-941</strain>
    </source>
</reference>
<evidence type="ECO:0000255" key="1">
    <source>
        <dbReference type="HAMAP-Rule" id="MF_00804"/>
    </source>
</evidence>
<name>BETB_BRUAB</name>
<organism>
    <name type="scientific">Brucella abortus biovar 1 (strain 9-941)</name>
    <dbReference type="NCBI Taxonomy" id="262698"/>
    <lineage>
        <taxon>Bacteria</taxon>
        <taxon>Pseudomonadati</taxon>
        <taxon>Pseudomonadota</taxon>
        <taxon>Alphaproteobacteria</taxon>
        <taxon>Hyphomicrobiales</taxon>
        <taxon>Brucellaceae</taxon>
        <taxon>Brucella/Ochrobactrum group</taxon>
        <taxon>Brucella</taxon>
    </lineage>
</organism>
<keyword id="KW-0479">Metal-binding</keyword>
<keyword id="KW-0520">NAD</keyword>
<keyword id="KW-0521">NADP</keyword>
<keyword id="KW-0558">Oxidation</keyword>
<keyword id="KW-0560">Oxidoreductase</keyword>
<keyword id="KW-0630">Potassium</keyword>
<accession>Q57EI0</accession>
<gene>
    <name evidence="1" type="primary">betB</name>
    <name type="ordered locus">BruAb1_0574</name>
</gene>
<dbReference type="EC" id="1.2.1.8" evidence="1"/>
<dbReference type="EMBL" id="AE017223">
    <property type="protein sequence ID" value="AAX73954.1"/>
    <property type="molecule type" value="Genomic_DNA"/>
</dbReference>
<dbReference type="RefSeq" id="WP_002963701.1">
    <property type="nucleotide sequence ID" value="NC_006932.1"/>
</dbReference>
<dbReference type="SMR" id="Q57EI0"/>
<dbReference type="EnsemblBacteria" id="AAX73954">
    <property type="protein sequence ID" value="AAX73954"/>
    <property type="gene ID" value="BruAb1_0574"/>
</dbReference>
<dbReference type="GeneID" id="97534102"/>
<dbReference type="KEGG" id="bmb:BruAb1_0574"/>
<dbReference type="HOGENOM" id="CLU_005391_0_1_5"/>
<dbReference type="BRENDA" id="1.2.1.8">
    <property type="organism ID" value="994"/>
</dbReference>
<dbReference type="UniPathway" id="UPA00529">
    <property type="reaction ID" value="UER00386"/>
</dbReference>
<dbReference type="Proteomes" id="UP000000540">
    <property type="component" value="Chromosome I"/>
</dbReference>
<dbReference type="GO" id="GO:0008802">
    <property type="term" value="F:betaine-aldehyde dehydrogenase (NAD+) activity"/>
    <property type="evidence" value="ECO:0007669"/>
    <property type="project" value="UniProtKB-UniRule"/>
</dbReference>
<dbReference type="GO" id="GO:0046872">
    <property type="term" value="F:metal ion binding"/>
    <property type="evidence" value="ECO:0007669"/>
    <property type="project" value="UniProtKB-KW"/>
</dbReference>
<dbReference type="GO" id="GO:0019285">
    <property type="term" value="P:glycine betaine biosynthetic process from choline"/>
    <property type="evidence" value="ECO:0007669"/>
    <property type="project" value="UniProtKB-UniRule"/>
</dbReference>
<dbReference type="CDD" id="cd07090">
    <property type="entry name" value="ALDH_F9_TMBADH"/>
    <property type="match status" value="1"/>
</dbReference>
<dbReference type="FunFam" id="3.40.605.10:FF:000026">
    <property type="entry name" value="Aldehyde dehydrogenase, putative"/>
    <property type="match status" value="1"/>
</dbReference>
<dbReference type="FunFam" id="3.40.309.10:FF:000014">
    <property type="entry name" value="NAD/NADP-dependent betaine aldehyde dehydrogenase"/>
    <property type="match status" value="1"/>
</dbReference>
<dbReference type="FunFam" id="3.40.605.10:FF:000007">
    <property type="entry name" value="NAD/NADP-dependent betaine aldehyde dehydrogenase"/>
    <property type="match status" value="1"/>
</dbReference>
<dbReference type="Gene3D" id="3.40.605.10">
    <property type="entry name" value="Aldehyde Dehydrogenase, Chain A, domain 1"/>
    <property type="match status" value="1"/>
</dbReference>
<dbReference type="Gene3D" id="3.40.309.10">
    <property type="entry name" value="Aldehyde Dehydrogenase, Chain A, domain 2"/>
    <property type="match status" value="1"/>
</dbReference>
<dbReference type="HAMAP" id="MF_00804">
    <property type="entry name" value="BADH"/>
    <property type="match status" value="1"/>
</dbReference>
<dbReference type="InterPro" id="IPR016161">
    <property type="entry name" value="Ald_DH/histidinol_DH"/>
</dbReference>
<dbReference type="InterPro" id="IPR016163">
    <property type="entry name" value="Ald_DH_C"/>
</dbReference>
<dbReference type="InterPro" id="IPR016160">
    <property type="entry name" value="Ald_DH_CS_CYS"/>
</dbReference>
<dbReference type="InterPro" id="IPR029510">
    <property type="entry name" value="Ald_DH_CS_GLU"/>
</dbReference>
<dbReference type="InterPro" id="IPR016162">
    <property type="entry name" value="Ald_DH_N"/>
</dbReference>
<dbReference type="InterPro" id="IPR015590">
    <property type="entry name" value="Aldehyde_DH_dom"/>
</dbReference>
<dbReference type="InterPro" id="IPR011264">
    <property type="entry name" value="BADH"/>
</dbReference>
<dbReference type="NCBIfam" id="TIGR01804">
    <property type="entry name" value="BADH"/>
    <property type="match status" value="1"/>
</dbReference>
<dbReference type="NCBIfam" id="NF009725">
    <property type="entry name" value="PRK13252.1"/>
    <property type="match status" value="1"/>
</dbReference>
<dbReference type="PANTHER" id="PTHR11699">
    <property type="entry name" value="ALDEHYDE DEHYDROGENASE-RELATED"/>
    <property type="match status" value="1"/>
</dbReference>
<dbReference type="Pfam" id="PF00171">
    <property type="entry name" value="Aldedh"/>
    <property type="match status" value="1"/>
</dbReference>
<dbReference type="SUPFAM" id="SSF53720">
    <property type="entry name" value="ALDH-like"/>
    <property type="match status" value="1"/>
</dbReference>
<dbReference type="PROSITE" id="PS00070">
    <property type="entry name" value="ALDEHYDE_DEHYDR_CYS"/>
    <property type="match status" value="1"/>
</dbReference>
<dbReference type="PROSITE" id="PS00687">
    <property type="entry name" value="ALDEHYDE_DEHYDR_GLU"/>
    <property type="match status" value="1"/>
</dbReference>
<feature type="chain" id="PRO_0000056536" description="Betaine aldehyde dehydrogenase">
    <location>
        <begin position="1"/>
        <end position="487"/>
    </location>
</feature>
<feature type="active site" description="Charge relay system" evidence="1">
    <location>
        <position position="161"/>
    </location>
</feature>
<feature type="active site" description="Proton acceptor" evidence="1">
    <location>
        <position position="249"/>
    </location>
</feature>
<feature type="active site" description="Nucleophile" evidence="1">
    <location>
        <position position="283"/>
    </location>
</feature>
<feature type="active site" description="Charge relay system" evidence="1">
    <location>
        <position position="461"/>
    </location>
</feature>
<feature type="binding site" evidence="1">
    <location>
        <position position="27"/>
    </location>
    <ligand>
        <name>K(+)</name>
        <dbReference type="ChEBI" id="CHEBI:29103"/>
        <label>1</label>
    </ligand>
</feature>
<feature type="binding site" evidence="1">
    <location>
        <position position="93"/>
    </location>
    <ligand>
        <name>K(+)</name>
        <dbReference type="ChEBI" id="CHEBI:29103"/>
        <label>1</label>
    </ligand>
</feature>
<feature type="binding site" evidence="1">
    <location>
        <begin position="149"/>
        <end position="151"/>
    </location>
    <ligand>
        <name>NAD(+)</name>
        <dbReference type="ChEBI" id="CHEBI:57540"/>
    </ligand>
</feature>
<feature type="binding site" evidence="1">
    <location>
        <begin position="175"/>
        <end position="178"/>
    </location>
    <ligand>
        <name>NAD(+)</name>
        <dbReference type="ChEBI" id="CHEBI:57540"/>
    </ligand>
</feature>
<feature type="binding site" evidence="1">
    <location>
        <begin position="228"/>
        <end position="231"/>
    </location>
    <ligand>
        <name>NAD(+)</name>
        <dbReference type="ChEBI" id="CHEBI:57540"/>
    </ligand>
</feature>
<feature type="binding site" evidence="1">
    <location>
        <position position="243"/>
    </location>
    <ligand>
        <name>K(+)</name>
        <dbReference type="ChEBI" id="CHEBI:29103"/>
        <label>2</label>
    </ligand>
</feature>
<feature type="binding site" evidence="1">
    <location>
        <position position="251"/>
    </location>
    <ligand>
        <name>NAD(+)</name>
        <dbReference type="ChEBI" id="CHEBI:57540"/>
    </ligand>
</feature>
<feature type="binding site" description="covalent" evidence="1">
    <location>
        <position position="283"/>
    </location>
    <ligand>
        <name>NAD(+)</name>
        <dbReference type="ChEBI" id="CHEBI:57540"/>
    </ligand>
</feature>
<feature type="binding site" evidence="1">
    <location>
        <position position="384"/>
    </location>
    <ligand>
        <name>NAD(+)</name>
        <dbReference type="ChEBI" id="CHEBI:57540"/>
    </ligand>
</feature>
<feature type="binding site" evidence="1">
    <location>
        <position position="454"/>
    </location>
    <ligand>
        <name>K(+)</name>
        <dbReference type="ChEBI" id="CHEBI:29103"/>
        <label>2</label>
    </ligand>
</feature>
<feature type="binding site" evidence="1">
    <location>
        <position position="457"/>
    </location>
    <ligand>
        <name>K(+)</name>
        <dbReference type="ChEBI" id="CHEBI:29103"/>
        <label>2</label>
    </ligand>
</feature>
<feature type="modified residue" description="Cysteine sulfenic acid (-SOH)" evidence="1">
    <location>
        <position position="283"/>
    </location>
</feature>
<proteinExistence type="inferred from homology"/>
<sequence length="487" mass="52035">MKAQPKASHFIGGAFVEDKAGKPLPVIYPATGEEIASLYSATPGIIEAAYAAALKAQGEWAALKPVERGRILRRTAEILREKNRKLSKLETLDTGKALQETLVADAASAADALEFFGGIISGFNGEFVELGGSFAYTRREALGICVGIGAWNYPIQIAAWKSAPALAMGNAFIFKPSENTPLSALALAEAYKEAGLPDGLFNVVQGYGDVGAALVNHRLTAKVSLTGSVPTGRRIMAQAGEQLKHVTMELGGKSPLIVFDDADLESAIGGAMLGNFYSTGQVCSNGTRVFVHKNIRERFIERLVERTRKIRIGDPFDEATQMGPLISAAQRDKVLSYIKKGKAEGATLACGGGVPKLQGFDKGFFIEPTVFADVTDTMTIAREEIFGPVMSVLEFSDEDEVIARANDSEFGLAAGVFTADLSRGHHVIGQIKAGTCWINAYNLTPVEVPFGGYKQSGIGRENGIAALAHYSQIKTVYVEMGKVDSPY</sequence>
<comment type="function">
    <text evidence="1">Involved in the biosynthesis of the osmoprotectant glycine betaine. Catalyzes the irreversible oxidation of betaine aldehyde to the corresponding acid.</text>
</comment>
<comment type="catalytic activity">
    <reaction evidence="1">
        <text>betaine aldehyde + NAD(+) + H2O = glycine betaine + NADH + 2 H(+)</text>
        <dbReference type="Rhea" id="RHEA:15305"/>
        <dbReference type="ChEBI" id="CHEBI:15377"/>
        <dbReference type="ChEBI" id="CHEBI:15378"/>
        <dbReference type="ChEBI" id="CHEBI:15710"/>
        <dbReference type="ChEBI" id="CHEBI:17750"/>
        <dbReference type="ChEBI" id="CHEBI:57540"/>
        <dbReference type="ChEBI" id="CHEBI:57945"/>
        <dbReference type="EC" id="1.2.1.8"/>
    </reaction>
    <physiologicalReaction direction="left-to-right" evidence="1">
        <dbReference type="Rhea" id="RHEA:15306"/>
    </physiologicalReaction>
</comment>
<comment type="cofactor">
    <cofactor evidence="1">
        <name>K(+)</name>
        <dbReference type="ChEBI" id="CHEBI:29103"/>
    </cofactor>
    <text evidence="1">Binds 2 potassium ions per subunit.</text>
</comment>
<comment type="pathway">
    <text evidence="1">Amine and polyamine biosynthesis; betaine biosynthesis via choline pathway; betaine from betaine aldehyde: step 1/1.</text>
</comment>
<comment type="subunit">
    <text evidence="1">Dimer of dimers.</text>
</comment>
<comment type="similarity">
    <text evidence="1">Belongs to the aldehyde dehydrogenase family.</text>
</comment>
<protein>
    <recommendedName>
        <fullName evidence="1">Betaine aldehyde dehydrogenase</fullName>
        <shortName evidence="1">BADH</shortName>
        <ecNumber evidence="1">1.2.1.8</ecNumber>
    </recommendedName>
</protein>